<comment type="function">
    <text evidence="1">Ribonucleoside-diphosphate reductase holoenzyme provides the precursors necessary for viral DNA synthesis. Allows virus growth in non-dividing cells, as well as reactivation from latency in infected hosts. Catalyzes the biosynthesis of deoxyribonucleotides from the corresponding ribonucleotides.</text>
</comment>
<comment type="catalytic activity">
    <reaction evidence="1">
        <text>a 2'-deoxyribonucleoside 5'-diphosphate + [thioredoxin]-disulfide + H2O = a ribonucleoside 5'-diphosphate + [thioredoxin]-dithiol</text>
        <dbReference type="Rhea" id="RHEA:23252"/>
        <dbReference type="Rhea" id="RHEA-COMP:10698"/>
        <dbReference type="Rhea" id="RHEA-COMP:10700"/>
        <dbReference type="ChEBI" id="CHEBI:15377"/>
        <dbReference type="ChEBI" id="CHEBI:29950"/>
        <dbReference type="ChEBI" id="CHEBI:50058"/>
        <dbReference type="ChEBI" id="CHEBI:57930"/>
        <dbReference type="ChEBI" id="CHEBI:73316"/>
        <dbReference type="EC" id="1.17.4.1"/>
    </reaction>
</comment>
<comment type="cofactor">
    <cofactor evidence="1">
        <name>Fe cation</name>
        <dbReference type="ChEBI" id="CHEBI:24875"/>
    </cofactor>
</comment>
<comment type="subunit">
    <text evidence="1">Heterotetramer composed of a homodimer of the large subunit (R1) and a homodimer of the small subunit (R2). Larger multisubunit protein complex are also active, composed of (R1)n(R2)n.</text>
</comment>
<comment type="subcellular location">
    <subcellularLocation>
        <location evidence="1">Host membrane</location>
        <topology evidence="1">Single-pass membrane protein</topology>
    </subcellularLocation>
</comment>
<comment type="similarity">
    <text evidence="1">Belongs to the ribonucleoside diphosphate reductase small chain family.</text>
</comment>
<dbReference type="EC" id="1.17.4.1" evidence="1"/>
<dbReference type="EMBL" id="DQ279927">
    <property type="protein sequence ID" value="ABB89233.1"/>
    <property type="molecule type" value="Genomic_DNA"/>
</dbReference>
<dbReference type="RefSeq" id="YP_001129453.1">
    <property type="nucleotide sequence ID" value="NC_009334.1"/>
</dbReference>
<dbReference type="RefSeq" id="YP_401656.1">
    <property type="nucleotide sequence ID" value="NC_007605.1"/>
</dbReference>
<dbReference type="SMR" id="P0CAP7"/>
<dbReference type="DNASU" id="3783683"/>
<dbReference type="GeneID" id="3783683"/>
<dbReference type="KEGG" id="vg:3783683"/>
<dbReference type="KEGG" id="vg:5176181"/>
<dbReference type="Proteomes" id="UP000007639">
    <property type="component" value="Genome"/>
</dbReference>
<dbReference type="GO" id="GO:0033644">
    <property type="term" value="C:host cell membrane"/>
    <property type="evidence" value="ECO:0007669"/>
    <property type="project" value="UniProtKB-SubCell"/>
</dbReference>
<dbReference type="GO" id="GO:0016020">
    <property type="term" value="C:membrane"/>
    <property type="evidence" value="ECO:0007669"/>
    <property type="project" value="UniProtKB-KW"/>
</dbReference>
<dbReference type="GO" id="GO:0046872">
    <property type="term" value="F:metal ion binding"/>
    <property type="evidence" value="ECO:0007669"/>
    <property type="project" value="UniProtKB-KW"/>
</dbReference>
<dbReference type="GO" id="GO:0004748">
    <property type="term" value="F:ribonucleoside-diphosphate reductase activity, thioredoxin disulfide as acceptor"/>
    <property type="evidence" value="ECO:0007669"/>
    <property type="project" value="UniProtKB-EC"/>
</dbReference>
<dbReference type="GO" id="GO:0009263">
    <property type="term" value="P:deoxyribonucleotide biosynthetic process"/>
    <property type="evidence" value="ECO:0007669"/>
    <property type="project" value="InterPro"/>
</dbReference>
<dbReference type="GO" id="GO:0006260">
    <property type="term" value="P:DNA replication"/>
    <property type="evidence" value="ECO:0007669"/>
    <property type="project" value="UniProtKB-KW"/>
</dbReference>
<dbReference type="GO" id="GO:0019046">
    <property type="term" value="P:release from viral latency"/>
    <property type="evidence" value="ECO:0007669"/>
    <property type="project" value="UniProtKB-KW"/>
</dbReference>
<dbReference type="CDD" id="cd01049">
    <property type="entry name" value="RNRR2"/>
    <property type="match status" value="1"/>
</dbReference>
<dbReference type="Gene3D" id="1.10.620.20">
    <property type="entry name" value="Ribonucleotide Reductase, subunit A"/>
    <property type="match status" value="1"/>
</dbReference>
<dbReference type="HAMAP" id="MF_04028">
    <property type="entry name" value="HSV_RIR2"/>
    <property type="match status" value="1"/>
</dbReference>
<dbReference type="InterPro" id="IPR009078">
    <property type="entry name" value="Ferritin-like_SF"/>
</dbReference>
<dbReference type="InterPro" id="IPR034715">
    <property type="entry name" value="HSV_RIR2"/>
</dbReference>
<dbReference type="InterPro" id="IPR012348">
    <property type="entry name" value="RNR-like"/>
</dbReference>
<dbReference type="InterPro" id="IPR033909">
    <property type="entry name" value="RNR_small"/>
</dbReference>
<dbReference type="InterPro" id="IPR030475">
    <property type="entry name" value="RNR_small_AS"/>
</dbReference>
<dbReference type="InterPro" id="IPR000358">
    <property type="entry name" value="RNR_small_fam"/>
</dbReference>
<dbReference type="PANTHER" id="PTHR23409">
    <property type="entry name" value="RIBONUCLEOSIDE-DIPHOSPHATE REDUCTASE SMALL CHAIN"/>
    <property type="match status" value="1"/>
</dbReference>
<dbReference type="PANTHER" id="PTHR23409:SF18">
    <property type="entry name" value="RIBONUCLEOSIDE-DIPHOSPHATE REDUCTASE SUBUNIT M2"/>
    <property type="match status" value="1"/>
</dbReference>
<dbReference type="Pfam" id="PF00268">
    <property type="entry name" value="Ribonuc_red_sm"/>
    <property type="match status" value="1"/>
</dbReference>
<dbReference type="SUPFAM" id="SSF47240">
    <property type="entry name" value="Ferritin-like"/>
    <property type="match status" value="1"/>
</dbReference>
<dbReference type="PROSITE" id="PS00368">
    <property type="entry name" value="RIBORED_SMALL"/>
    <property type="match status" value="1"/>
</dbReference>
<sequence length="302" mass="34359">MSKLLYVRDHEGFACLTVETHRNRWFAAHIVLTKDCGCLKLLNERDLEFYKFLFTFLAMAEKLVNFNIDELVTSFESHDIDHYYTEQKAMENVHGETYANILNMLFDGDRAAMNAYAEAIMADEALQAKISWLRDKVAAAVTLPEKILVFLLIEGIFFISSFYSIALLRVRGLMPGICLANNYISRDELLHTRAASLLYNSMTAKADRPRATWIQELFRTAVEVETAFIEARGEGVTLVDVRAIKQFLEATADRILGDIGQAPLYGTPPPKDCPLTYMTSIKQTNFFEQESSDYTMLVVDDL</sequence>
<protein>
    <recommendedName>
        <fullName evidence="1">Ribonucleoside-diphosphate reductase small subunit</fullName>
        <ecNumber evidence="1">1.17.4.1</ecNumber>
    </recommendedName>
    <alternativeName>
        <fullName evidence="1">Ribonucleotide reductase small subunit</fullName>
    </alternativeName>
</protein>
<keyword id="KW-0235">DNA replication</keyword>
<keyword id="KW-1043">Host membrane</keyword>
<keyword id="KW-0408">Iron</keyword>
<keyword id="KW-0472">Membrane</keyword>
<keyword id="KW-0479">Metal-binding</keyword>
<keyword id="KW-0560">Oxidoreductase</keyword>
<keyword id="KW-1185">Reference proteome</keyword>
<keyword id="KW-0812">Transmembrane</keyword>
<keyword id="KW-1133">Transmembrane helix</keyword>
<keyword id="KW-1251">Viral latency</keyword>
<keyword id="KW-1272">Viral reactivation from latency</keyword>
<accession>P0CAP7</accession>
<accession>Q777G0</accession>
<reference key="1">
    <citation type="journal article" date="2006" name="Virology">
        <title>The genome of Epstein-Barr virus type 2 strain AG876.</title>
        <authorList>
            <person name="Dolan A."/>
            <person name="Addison C."/>
            <person name="Gatherer D."/>
            <person name="Davison A.J."/>
            <person name="McGeoch D.J."/>
        </authorList>
    </citation>
    <scope>NUCLEOTIDE SEQUENCE [LARGE SCALE GENOMIC DNA]</scope>
</reference>
<reference key="2">
    <citation type="journal article" date="2009" name="Trends Biochem. Sci.">
        <title>Tinkering with a viral ribonucleotide reductase.</title>
        <authorList>
            <person name="Lembo D."/>
            <person name="Brune W."/>
        </authorList>
    </citation>
    <scope>REVIEW</scope>
</reference>
<evidence type="ECO:0000255" key="1">
    <source>
        <dbReference type="HAMAP-Rule" id="MF_04028"/>
    </source>
</evidence>
<organismHost>
    <name type="scientific">Homo sapiens</name>
    <name type="common">Human</name>
    <dbReference type="NCBI Taxonomy" id="9606"/>
</organismHost>
<proteinExistence type="inferred from homology"/>
<name>RIR2_EBVA8</name>
<gene>
    <name evidence="1" type="primary">RIR2</name>
    <name type="ORF">BaRF1</name>
</gene>
<organism>
    <name type="scientific">Epstein-Barr virus (strain AG876)</name>
    <name type="common">HHV-4</name>
    <name type="synonym">Human herpesvirus 4</name>
    <dbReference type="NCBI Taxonomy" id="82830"/>
    <lineage>
        <taxon>Viruses</taxon>
        <taxon>Duplodnaviria</taxon>
        <taxon>Heunggongvirae</taxon>
        <taxon>Peploviricota</taxon>
        <taxon>Herviviricetes</taxon>
        <taxon>Herpesvirales</taxon>
        <taxon>Orthoherpesviridae</taxon>
        <taxon>Gammaherpesvirinae</taxon>
        <taxon>Lymphocryptovirus</taxon>
        <taxon>Lymphocryptovirus humangamma4</taxon>
        <taxon>Epstein-Barr virus (strain GD1)</taxon>
    </lineage>
</organism>
<feature type="chain" id="PRO_0000375967" description="Ribonucleoside-diphosphate reductase small subunit">
    <location>
        <begin position="1"/>
        <end position="302"/>
    </location>
</feature>
<feature type="transmembrane region" description="Helical" evidence="1">
    <location>
        <begin position="147"/>
        <end position="167"/>
    </location>
</feature>
<feature type="active site" evidence="1">
    <location>
        <position position="98"/>
    </location>
</feature>
<feature type="binding site" evidence="1">
    <location>
        <position position="61"/>
    </location>
    <ligand>
        <name>Fe cation</name>
        <dbReference type="ChEBI" id="CHEBI:24875"/>
        <label>1</label>
    </ligand>
</feature>
<feature type="binding site" evidence="1">
    <location>
        <position position="91"/>
    </location>
    <ligand>
        <name>Fe cation</name>
        <dbReference type="ChEBI" id="CHEBI:24875"/>
        <label>1</label>
    </ligand>
</feature>
<feature type="binding site" evidence="1">
    <location>
        <position position="91"/>
    </location>
    <ligand>
        <name>Fe cation</name>
        <dbReference type="ChEBI" id="CHEBI:24875"/>
        <label>2</label>
    </ligand>
</feature>
<feature type="binding site" evidence="1">
    <location>
        <position position="94"/>
    </location>
    <ligand>
        <name>Fe cation</name>
        <dbReference type="ChEBI" id="CHEBI:24875"/>
        <label>1</label>
    </ligand>
</feature>
<feature type="binding site" evidence="1">
    <location>
        <position position="154"/>
    </location>
    <ligand>
        <name>Fe cation</name>
        <dbReference type="ChEBI" id="CHEBI:24875"/>
        <label>2</label>
    </ligand>
</feature>
<feature type="binding site" evidence="1">
    <location>
        <position position="188"/>
    </location>
    <ligand>
        <name>Fe cation</name>
        <dbReference type="ChEBI" id="CHEBI:24875"/>
        <label>2</label>
    </ligand>
</feature>
<feature type="binding site" evidence="1">
    <location>
        <position position="191"/>
    </location>
    <ligand>
        <name>Fe cation</name>
        <dbReference type="ChEBI" id="CHEBI:24875"/>
        <label>2</label>
    </ligand>
</feature>